<feature type="chain" id="PRO_1000128152" description="Small ribosomal subunit protein uS9">
    <location>
        <begin position="1"/>
        <end position="137"/>
    </location>
</feature>
<feature type="region of interest" description="Disordered" evidence="2">
    <location>
        <begin position="105"/>
        <end position="137"/>
    </location>
</feature>
<feature type="compositionally biased region" description="Basic and acidic residues" evidence="2">
    <location>
        <begin position="105"/>
        <end position="117"/>
    </location>
</feature>
<feature type="compositionally biased region" description="Basic residues" evidence="2">
    <location>
        <begin position="118"/>
        <end position="137"/>
    </location>
</feature>
<gene>
    <name evidence="1" type="primary">rpsI</name>
    <name evidence="1" type="synonym">rps9</name>
    <name type="ordered locus">P9211_16511</name>
</gene>
<name>RS9_PROM4</name>
<accession>A9BCM0</accession>
<comment type="similarity">
    <text evidence="1">Belongs to the universal ribosomal protein uS9 family.</text>
</comment>
<reference key="1">
    <citation type="journal article" date="2007" name="PLoS Genet.">
        <title>Patterns and implications of gene gain and loss in the evolution of Prochlorococcus.</title>
        <authorList>
            <person name="Kettler G.C."/>
            <person name="Martiny A.C."/>
            <person name="Huang K."/>
            <person name="Zucker J."/>
            <person name="Coleman M.L."/>
            <person name="Rodrigue S."/>
            <person name="Chen F."/>
            <person name="Lapidus A."/>
            <person name="Ferriera S."/>
            <person name="Johnson J."/>
            <person name="Steglich C."/>
            <person name="Church G.M."/>
            <person name="Richardson P."/>
            <person name="Chisholm S.W."/>
        </authorList>
    </citation>
    <scope>NUCLEOTIDE SEQUENCE [LARGE SCALE GENOMIC DNA]</scope>
    <source>
        <strain>MIT 9211</strain>
    </source>
</reference>
<dbReference type="EMBL" id="CP000878">
    <property type="protein sequence ID" value="ABX09582.1"/>
    <property type="molecule type" value="Genomic_DNA"/>
</dbReference>
<dbReference type="RefSeq" id="WP_012196203.1">
    <property type="nucleotide sequence ID" value="NC_009976.1"/>
</dbReference>
<dbReference type="SMR" id="A9BCM0"/>
<dbReference type="STRING" id="93059.P9211_16511"/>
<dbReference type="KEGG" id="pmj:P9211_16511"/>
<dbReference type="eggNOG" id="COG0103">
    <property type="taxonomic scope" value="Bacteria"/>
</dbReference>
<dbReference type="HOGENOM" id="CLU_046483_2_1_3"/>
<dbReference type="OrthoDB" id="9803965at2"/>
<dbReference type="Proteomes" id="UP000000788">
    <property type="component" value="Chromosome"/>
</dbReference>
<dbReference type="GO" id="GO:0022627">
    <property type="term" value="C:cytosolic small ribosomal subunit"/>
    <property type="evidence" value="ECO:0007669"/>
    <property type="project" value="TreeGrafter"/>
</dbReference>
<dbReference type="GO" id="GO:0003723">
    <property type="term" value="F:RNA binding"/>
    <property type="evidence" value="ECO:0007669"/>
    <property type="project" value="TreeGrafter"/>
</dbReference>
<dbReference type="GO" id="GO:0003735">
    <property type="term" value="F:structural constituent of ribosome"/>
    <property type="evidence" value="ECO:0007669"/>
    <property type="project" value="InterPro"/>
</dbReference>
<dbReference type="GO" id="GO:0006412">
    <property type="term" value="P:translation"/>
    <property type="evidence" value="ECO:0007669"/>
    <property type="project" value="UniProtKB-UniRule"/>
</dbReference>
<dbReference type="FunFam" id="3.30.230.10:FF:000001">
    <property type="entry name" value="30S ribosomal protein S9"/>
    <property type="match status" value="1"/>
</dbReference>
<dbReference type="Gene3D" id="3.30.230.10">
    <property type="match status" value="1"/>
</dbReference>
<dbReference type="HAMAP" id="MF_00532_B">
    <property type="entry name" value="Ribosomal_uS9_B"/>
    <property type="match status" value="1"/>
</dbReference>
<dbReference type="InterPro" id="IPR020568">
    <property type="entry name" value="Ribosomal_Su5_D2-typ_SF"/>
</dbReference>
<dbReference type="InterPro" id="IPR000754">
    <property type="entry name" value="Ribosomal_uS9"/>
</dbReference>
<dbReference type="InterPro" id="IPR023035">
    <property type="entry name" value="Ribosomal_uS9_bac/plastid"/>
</dbReference>
<dbReference type="InterPro" id="IPR020574">
    <property type="entry name" value="Ribosomal_uS9_CS"/>
</dbReference>
<dbReference type="InterPro" id="IPR014721">
    <property type="entry name" value="Ribsml_uS5_D2-typ_fold_subgr"/>
</dbReference>
<dbReference type="NCBIfam" id="NF001099">
    <property type="entry name" value="PRK00132.1"/>
    <property type="match status" value="1"/>
</dbReference>
<dbReference type="PANTHER" id="PTHR21569">
    <property type="entry name" value="RIBOSOMAL PROTEIN S9"/>
    <property type="match status" value="1"/>
</dbReference>
<dbReference type="PANTHER" id="PTHR21569:SF1">
    <property type="entry name" value="SMALL RIBOSOMAL SUBUNIT PROTEIN US9M"/>
    <property type="match status" value="1"/>
</dbReference>
<dbReference type="Pfam" id="PF00380">
    <property type="entry name" value="Ribosomal_S9"/>
    <property type="match status" value="1"/>
</dbReference>
<dbReference type="SUPFAM" id="SSF54211">
    <property type="entry name" value="Ribosomal protein S5 domain 2-like"/>
    <property type="match status" value="1"/>
</dbReference>
<dbReference type="PROSITE" id="PS00360">
    <property type="entry name" value="RIBOSOMAL_S9"/>
    <property type="match status" value="1"/>
</dbReference>
<protein>
    <recommendedName>
        <fullName evidence="1">Small ribosomal subunit protein uS9</fullName>
    </recommendedName>
    <alternativeName>
        <fullName evidence="3">30S ribosomal protein S9</fullName>
    </alternativeName>
</protein>
<organism>
    <name type="scientific">Prochlorococcus marinus (strain MIT 9211)</name>
    <dbReference type="NCBI Taxonomy" id="93059"/>
    <lineage>
        <taxon>Bacteria</taxon>
        <taxon>Bacillati</taxon>
        <taxon>Cyanobacteriota</taxon>
        <taxon>Cyanophyceae</taxon>
        <taxon>Synechococcales</taxon>
        <taxon>Prochlorococcaceae</taxon>
        <taxon>Prochlorococcus</taxon>
    </lineage>
</organism>
<sequence>MNSSSQRNTVVYWGTGRRKTSVARVRLIPGTGKITINGRPGDHYLNFNPAYLAAVKAPLQTLGLSDSYDVLVNVYGGGLTGQADAIKQGAARALCELSADNRKPLKIEGHLSRDPRAKERRKYGLKKARKAPQFSKR</sequence>
<keyword id="KW-1185">Reference proteome</keyword>
<keyword id="KW-0687">Ribonucleoprotein</keyword>
<keyword id="KW-0689">Ribosomal protein</keyword>
<evidence type="ECO:0000255" key="1">
    <source>
        <dbReference type="HAMAP-Rule" id="MF_00532"/>
    </source>
</evidence>
<evidence type="ECO:0000256" key="2">
    <source>
        <dbReference type="SAM" id="MobiDB-lite"/>
    </source>
</evidence>
<evidence type="ECO:0000305" key="3"/>
<proteinExistence type="inferred from homology"/>